<name>PSMA3_STAA8</name>
<accession>P0C805</accession>
<gene>
    <name type="primary">psmA3</name>
    <name type="ordered locus">SAOUHSC_00411.2</name>
</gene>
<feature type="peptide" id="PRO_0000345060" description="Phenol-soluble modulin alpha 3 peptide">
    <location>
        <begin position="1"/>
        <end position="22"/>
    </location>
</feature>
<feature type="helix" evidence="3">
    <location>
        <begin position="3"/>
        <end position="19"/>
    </location>
</feature>
<comment type="function">
    <text evidence="1">Peptide which can recruit, activate and subsequently lyse human neutrophils, thus eliminating the main cellular defense against infection.</text>
</comment>
<comment type="similarity">
    <text evidence="2">Belongs to the phenol-soluble modulin alpha peptides family.</text>
</comment>
<organism>
    <name type="scientific">Staphylococcus aureus (strain NCTC 8325 / PS 47)</name>
    <dbReference type="NCBI Taxonomy" id="93061"/>
    <lineage>
        <taxon>Bacteria</taxon>
        <taxon>Bacillati</taxon>
        <taxon>Bacillota</taxon>
        <taxon>Bacilli</taxon>
        <taxon>Bacillales</taxon>
        <taxon>Staphylococcaceae</taxon>
        <taxon>Staphylococcus</taxon>
    </lineage>
</organism>
<protein>
    <recommendedName>
        <fullName>Phenol-soluble modulin alpha 3 peptide</fullName>
    </recommendedName>
</protein>
<dbReference type="EMBL" id="CP000253">
    <property type="status" value="NOT_ANNOTATED_CDS"/>
    <property type="molecule type" value="Genomic_DNA"/>
</dbReference>
<dbReference type="RefSeq" id="WP_014373779.1">
    <property type="nucleotide sequence ID" value="NZ_LS483365.1"/>
</dbReference>
<dbReference type="PDB" id="5I55">
    <property type="method" value="X-ray"/>
    <property type="resolution" value="1.45 A"/>
    <property type="chains" value="A=1-22"/>
</dbReference>
<dbReference type="PDB" id="5KGY">
    <property type="method" value="NMR"/>
    <property type="chains" value="A=2-22"/>
</dbReference>
<dbReference type="PDB" id="6GQ2">
    <property type="method" value="X-ray"/>
    <property type="resolution" value="1.54 A"/>
    <property type="chains" value="A=1-22"/>
</dbReference>
<dbReference type="PDB" id="6GQ5">
    <property type="method" value="X-ray"/>
    <property type="resolution" value="1.50 A"/>
    <property type="chains" value="A=1-22"/>
</dbReference>
<dbReference type="PDB" id="6GQC">
    <property type="method" value="X-ray"/>
    <property type="resolution" value="1.40 A"/>
    <property type="chains" value="A=1-22"/>
</dbReference>
<dbReference type="PDB" id="7SZZ">
    <property type="method" value="EM"/>
    <property type="resolution" value="3.90 A"/>
    <property type="chains" value="A/B/C/D=1-22"/>
</dbReference>
<dbReference type="PDB" id="7T0X">
    <property type="method" value="EM"/>
    <property type="resolution" value="4.40 A"/>
    <property type="chains" value="A/B/C/D=1-22"/>
</dbReference>
<dbReference type="PDBsum" id="5I55"/>
<dbReference type="PDBsum" id="5KGY"/>
<dbReference type="PDBsum" id="6GQ2"/>
<dbReference type="PDBsum" id="6GQ5"/>
<dbReference type="PDBsum" id="6GQC"/>
<dbReference type="PDBsum" id="7SZZ"/>
<dbReference type="PDBsum" id="7T0X"/>
<dbReference type="SMR" id="P0C805"/>
<dbReference type="Proteomes" id="UP000008816">
    <property type="component" value="Chromosome"/>
</dbReference>
<dbReference type="GO" id="GO:0031640">
    <property type="term" value="P:killing of cells of another organism"/>
    <property type="evidence" value="ECO:0007669"/>
    <property type="project" value="UniProtKB-KW"/>
</dbReference>
<dbReference type="InterPro" id="IPR031429">
    <property type="entry name" value="PSM_alpha"/>
</dbReference>
<dbReference type="InterPro" id="IPR053383">
    <property type="entry name" value="PSM_alpha_peptides"/>
</dbReference>
<dbReference type="NCBIfam" id="NF033426">
    <property type="entry name" value="PSM_alpha_3"/>
    <property type="match status" value="1"/>
</dbReference>
<dbReference type="Pfam" id="PF17063">
    <property type="entry name" value="PSMalpha"/>
    <property type="match status" value="1"/>
</dbReference>
<evidence type="ECO:0000250" key="1">
    <source>
        <dbReference type="UniProtKB" id="A9JX07"/>
    </source>
</evidence>
<evidence type="ECO:0000305" key="2"/>
<evidence type="ECO:0007829" key="3">
    <source>
        <dbReference type="PDB" id="6GQC"/>
    </source>
</evidence>
<reference key="1">
    <citation type="book" date="2006" name="Gram positive pathogens, 2nd edition">
        <title>The Staphylococcus aureus NCTC 8325 genome.</title>
        <editorList>
            <person name="Fischetti V."/>
            <person name="Novick R."/>
            <person name="Ferretti J."/>
            <person name="Portnoy D."/>
            <person name="Rood J."/>
        </editorList>
        <authorList>
            <person name="Gillaspy A.F."/>
            <person name="Worrell V."/>
            <person name="Orvis J."/>
            <person name="Roe B.A."/>
            <person name="Dyer D.W."/>
            <person name="Iandolo J.J."/>
        </authorList>
    </citation>
    <scope>NUCLEOTIDE SEQUENCE [LARGE SCALE GENOMIC DNA]</scope>
    <source>
        <strain>NCTC 8325 / PS 47</strain>
    </source>
</reference>
<keyword id="KW-0002">3D-structure</keyword>
<keyword id="KW-0204">Cytolysis</keyword>
<keyword id="KW-1185">Reference proteome</keyword>
<keyword id="KW-0843">Virulence</keyword>
<sequence>MEFVAKLFKFFKDLLGKFLGNN</sequence>
<proteinExistence type="evidence at protein level"/>